<dbReference type="EMBL" id="AC016529">
    <property type="protein sequence ID" value="AAG52582.1"/>
    <property type="molecule type" value="Genomic_DNA"/>
</dbReference>
<dbReference type="EMBL" id="AC067754">
    <property type="protein sequence ID" value="AAG51785.1"/>
    <property type="molecule type" value="Genomic_DNA"/>
</dbReference>
<dbReference type="EMBL" id="CP002684">
    <property type="protein sequence ID" value="AEE35302.1"/>
    <property type="molecule type" value="Genomic_DNA"/>
</dbReference>
<dbReference type="EMBL" id="CP002684">
    <property type="protein sequence ID" value="AEE35303.1"/>
    <property type="molecule type" value="Genomic_DNA"/>
</dbReference>
<dbReference type="EMBL" id="CP002684">
    <property type="protein sequence ID" value="AEE35304.1"/>
    <property type="molecule type" value="Genomic_DNA"/>
</dbReference>
<dbReference type="EMBL" id="CP002684">
    <property type="protein sequence ID" value="ANM59447.1"/>
    <property type="molecule type" value="Genomic_DNA"/>
</dbReference>
<dbReference type="EMBL" id="AY035041">
    <property type="protein sequence ID" value="AAK59546.1"/>
    <property type="molecule type" value="mRNA"/>
</dbReference>
<dbReference type="EMBL" id="AY051073">
    <property type="protein sequence ID" value="AAK93750.1"/>
    <property type="molecule type" value="mRNA"/>
</dbReference>
<dbReference type="EMBL" id="BX815356">
    <property type="status" value="NOT_ANNOTATED_CDS"/>
    <property type="molecule type" value="mRNA"/>
</dbReference>
<dbReference type="PIR" id="A96747">
    <property type="entry name" value="A96747"/>
</dbReference>
<dbReference type="RefSeq" id="NP_001321803.1">
    <molecule id="Q9C552-1"/>
    <property type="nucleotide sequence ID" value="NM_001334523.1"/>
</dbReference>
<dbReference type="RefSeq" id="NP_177376.1">
    <molecule id="Q9C552-1"/>
    <property type="nucleotide sequence ID" value="NM_105891.3"/>
</dbReference>
<dbReference type="RefSeq" id="NP_849878.2">
    <molecule id="Q9C552-2"/>
    <property type="nucleotide sequence ID" value="NM_179547.5"/>
</dbReference>
<dbReference type="RefSeq" id="NP_974130.1">
    <molecule id="Q9C552-2"/>
    <property type="nucleotide sequence ID" value="NM_202401.1"/>
</dbReference>
<dbReference type="PDB" id="5WZG">
    <property type="method" value="X-ray"/>
    <property type="resolution" value="2.55 A"/>
    <property type="chains" value="A=85-655"/>
</dbReference>
<dbReference type="PDB" id="5WZH">
    <property type="method" value="X-ray"/>
    <property type="resolution" value="2.51 A"/>
    <property type="chains" value="A=85-655"/>
</dbReference>
<dbReference type="PDB" id="5WZI">
    <property type="method" value="X-ray"/>
    <property type="resolution" value="2.75 A"/>
    <property type="chains" value="A=85-655"/>
</dbReference>
<dbReference type="PDB" id="5WZJ">
    <property type="method" value="X-ray"/>
    <property type="resolution" value="2.10 A"/>
    <property type="chains" value="A=85-655"/>
</dbReference>
<dbReference type="PDB" id="5WZK">
    <property type="method" value="X-ray"/>
    <property type="resolution" value="2.80 A"/>
    <property type="chains" value="A=85-655"/>
</dbReference>
<dbReference type="PDBsum" id="5WZG"/>
<dbReference type="PDBsum" id="5WZH"/>
<dbReference type="PDBsum" id="5WZI"/>
<dbReference type="PDBsum" id="5WZJ"/>
<dbReference type="PDBsum" id="5WZK"/>
<dbReference type="SMR" id="Q9C552"/>
<dbReference type="FunCoup" id="Q9C552">
    <property type="interactions" value="4063"/>
</dbReference>
<dbReference type="STRING" id="3702.Q9C552"/>
<dbReference type="iPTMnet" id="Q9C552"/>
<dbReference type="PaxDb" id="3702-AT1G72320.1"/>
<dbReference type="ProteomicsDB" id="226114">
    <molecule id="Q9C552-1"/>
</dbReference>
<dbReference type="EnsemblPlants" id="AT1G72320.1">
    <molecule id="Q9C552-1"/>
    <property type="protein sequence ID" value="AT1G72320.1"/>
    <property type="gene ID" value="AT1G72320"/>
</dbReference>
<dbReference type="EnsemblPlants" id="AT1G72320.2">
    <molecule id="Q9C552-2"/>
    <property type="protein sequence ID" value="AT1G72320.2"/>
    <property type="gene ID" value="AT1G72320"/>
</dbReference>
<dbReference type="EnsemblPlants" id="AT1G72320.3">
    <molecule id="Q9C552-2"/>
    <property type="protein sequence ID" value="AT1G72320.3"/>
    <property type="gene ID" value="AT1G72320"/>
</dbReference>
<dbReference type="EnsemblPlants" id="AT1G72320.4">
    <molecule id="Q9C552-1"/>
    <property type="protein sequence ID" value="AT1G72320.4"/>
    <property type="gene ID" value="AT1G72320"/>
</dbReference>
<dbReference type="GeneID" id="843564"/>
<dbReference type="Gramene" id="AT1G72320.1">
    <molecule id="Q9C552-1"/>
    <property type="protein sequence ID" value="AT1G72320.1"/>
    <property type="gene ID" value="AT1G72320"/>
</dbReference>
<dbReference type="Gramene" id="AT1G72320.2">
    <molecule id="Q9C552-2"/>
    <property type="protein sequence ID" value="AT1G72320.2"/>
    <property type="gene ID" value="AT1G72320"/>
</dbReference>
<dbReference type="Gramene" id="AT1G72320.3">
    <molecule id="Q9C552-2"/>
    <property type="protein sequence ID" value="AT1G72320.3"/>
    <property type="gene ID" value="AT1G72320"/>
</dbReference>
<dbReference type="Gramene" id="AT1G72320.4">
    <molecule id="Q9C552-1"/>
    <property type="protein sequence ID" value="AT1G72320.4"/>
    <property type="gene ID" value="AT1G72320"/>
</dbReference>
<dbReference type="KEGG" id="ath:AT1G72320"/>
<dbReference type="Araport" id="AT1G72320"/>
<dbReference type="TAIR" id="AT1G72320">
    <property type="gene designation" value="PUM23"/>
</dbReference>
<dbReference type="eggNOG" id="KOG2188">
    <property type="taxonomic scope" value="Eukaryota"/>
</dbReference>
<dbReference type="HOGENOM" id="CLU_010876_0_0_1"/>
<dbReference type="InParanoid" id="Q9C552"/>
<dbReference type="PhylomeDB" id="Q9C552"/>
<dbReference type="CD-CODE" id="4299E36E">
    <property type="entry name" value="Nucleolus"/>
</dbReference>
<dbReference type="PRO" id="PR:Q9C552"/>
<dbReference type="Proteomes" id="UP000006548">
    <property type="component" value="Chromosome 1"/>
</dbReference>
<dbReference type="ExpressionAtlas" id="Q9C552">
    <property type="expression patterns" value="baseline and differential"/>
</dbReference>
<dbReference type="GO" id="GO:0005730">
    <property type="term" value="C:nucleolus"/>
    <property type="evidence" value="ECO:0000314"/>
    <property type="project" value="TAIR"/>
</dbReference>
<dbReference type="GO" id="GO:0003723">
    <property type="term" value="F:RNA binding"/>
    <property type="evidence" value="ECO:0000269"/>
    <property type="project" value="DisProt"/>
</dbReference>
<dbReference type="GO" id="GO:0006417">
    <property type="term" value="P:regulation of translation"/>
    <property type="evidence" value="ECO:0007669"/>
    <property type="project" value="UniProtKB-KW"/>
</dbReference>
<dbReference type="GO" id="GO:0009749">
    <property type="term" value="P:response to glucose"/>
    <property type="evidence" value="ECO:0000270"/>
    <property type="project" value="TAIR"/>
</dbReference>
<dbReference type="GO" id="GO:0009744">
    <property type="term" value="P:response to sucrose"/>
    <property type="evidence" value="ECO:0000270"/>
    <property type="project" value="TAIR"/>
</dbReference>
<dbReference type="Gene3D" id="1.25.10.10">
    <property type="entry name" value="Leucine-rich Repeat Variant"/>
    <property type="match status" value="2"/>
</dbReference>
<dbReference type="InterPro" id="IPR011989">
    <property type="entry name" value="ARM-like"/>
</dbReference>
<dbReference type="InterPro" id="IPR016024">
    <property type="entry name" value="ARM-type_fold"/>
</dbReference>
<dbReference type="InterPro" id="IPR040000">
    <property type="entry name" value="NOP9"/>
</dbReference>
<dbReference type="InterPro" id="IPR001313">
    <property type="entry name" value="Pumilio_RNA-bd_rpt"/>
</dbReference>
<dbReference type="PANTHER" id="PTHR13102">
    <property type="entry name" value="NUCLEOLAR PROTEIN 9"/>
    <property type="match status" value="1"/>
</dbReference>
<dbReference type="PANTHER" id="PTHR13102:SF0">
    <property type="entry name" value="NUCLEOLAR PROTEIN 9"/>
    <property type="match status" value="1"/>
</dbReference>
<dbReference type="Pfam" id="PF22493">
    <property type="entry name" value="PUF_NOP9"/>
    <property type="match status" value="1"/>
</dbReference>
<dbReference type="SMART" id="SM00025">
    <property type="entry name" value="Pumilio"/>
    <property type="match status" value="6"/>
</dbReference>
<dbReference type="SUPFAM" id="SSF48371">
    <property type="entry name" value="ARM repeat"/>
    <property type="match status" value="2"/>
</dbReference>
<dbReference type="PROSITE" id="PS50302">
    <property type="entry name" value="PUM"/>
    <property type="match status" value="8"/>
</dbReference>
<gene>
    <name type="primary">APUM23</name>
    <name type="ordered locus">At1g72320</name>
    <name type="ORF">T10D10.21</name>
    <name type="ORF">T9N14.7</name>
</gene>
<feature type="chain" id="PRO_0000401405" description="Pumilio homolog 23">
    <location>
        <begin position="1"/>
        <end position="753"/>
    </location>
</feature>
<feature type="repeat" description="Pumilio 1">
    <location>
        <begin position="123"/>
        <end position="158"/>
    </location>
</feature>
<feature type="repeat" description="Pumilio 2">
    <location>
        <begin position="159"/>
        <end position="198"/>
    </location>
</feature>
<feature type="repeat" description="Pumilio 3">
    <location>
        <begin position="206"/>
        <end position="244"/>
    </location>
</feature>
<feature type="repeat" description="Pumilio 4">
    <location>
        <begin position="284"/>
        <end position="325"/>
    </location>
</feature>
<feature type="domain" description="PUM-HD">
    <location>
        <begin position="322"/>
        <end position="675"/>
    </location>
</feature>
<feature type="repeat" description="Pumilio 5">
    <location>
        <begin position="345"/>
        <end position="380"/>
    </location>
</feature>
<feature type="repeat" description="Pumilio 6">
    <location>
        <begin position="381"/>
        <end position="418"/>
    </location>
</feature>
<feature type="repeat" description="Pumilio 7">
    <location>
        <begin position="526"/>
        <end position="563"/>
    </location>
</feature>
<feature type="repeat" description="Pumilio 8">
    <location>
        <begin position="564"/>
        <end position="599"/>
    </location>
</feature>
<feature type="region of interest" description="Disordered" evidence="2">
    <location>
        <begin position="1"/>
        <end position="84"/>
    </location>
</feature>
<feature type="region of interest" description="Disordered" evidence="2">
    <location>
        <begin position="677"/>
        <end position="753"/>
    </location>
</feature>
<feature type="compositionally biased region" description="Basic and acidic residues" evidence="2">
    <location>
        <begin position="23"/>
        <end position="38"/>
    </location>
</feature>
<feature type="compositionally biased region" description="Basic and acidic residues" evidence="2">
    <location>
        <begin position="47"/>
        <end position="57"/>
    </location>
</feature>
<feature type="compositionally biased region" description="Basic and acidic residues" evidence="2">
    <location>
        <begin position="73"/>
        <end position="84"/>
    </location>
</feature>
<feature type="compositionally biased region" description="Basic and acidic residues" evidence="2">
    <location>
        <begin position="677"/>
        <end position="688"/>
    </location>
</feature>
<feature type="compositionally biased region" description="Basic and acidic residues" evidence="2">
    <location>
        <begin position="699"/>
        <end position="712"/>
    </location>
</feature>
<feature type="compositionally biased region" description="Basic and acidic residues" evidence="2">
    <location>
        <begin position="719"/>
        <end position="728"/>
    </location>
</feature>
<feature type="compositionally biased region" description="Basic residues" evidence="2">
    <location>
        <begin position="744"/>
        <end position="753"/>
    </location>
</feature>
<feature type="splice variant" id="VSP_040181" description="In isoform 2." evidence="4">
    <location>
        <begin position="1"/>
        <end position="22"/>
    </location>
</feature>
<feature type="helix" evidence="6">
    <location>
        <begin position="90"/>
        <end position="104"/>
    </location>
</feature>
<feature type="helix" evidence="6">
    <location>
        <begin position="110"/>
        <end position="122"/>
    </location>
</feature>
<feature type="turn" evidence="6">
    <location>
        <begin position="123"/>
        <end position="126"/>
    </location>
</feature>
<feature type="helix" evidence="6">
    <location>
        <begin position="128"/>
        <end position="132"/>
    </location>
</feature>
<feature type="helix" evidence="6">
    <location>
        <begin position="137"/>
        <end position="147"/>
    </location>
</feature>
<feature type="helix" evidence="6">
    <location>
        <begin position="150"/>
        <end position="160"/>
    </location>
</feature>
<feature type="helix" evidence="6">
    <location>
        <begin position="161"/>
        <end position="163"/>
    </location>
</feature>
<feature type="helix" evidence="6">
    <location>
        <begin position="164"/>
        <end position="168"/>
    </location>
</feature>
<feature type="helix" evidence="6">
    <location>
        <begin position="173"/>
        <end position="185"/>
    </location>
</feature>
<feature type="turn" evidence="6">
    <location>
        <begin position="186"/>
        <end position="189"/>
    </location>
</feature>
<feature type="helix" evidence="6">
    <location>
        <begin position="191"/>
        <end position="193"/>
    </location>
</feature>
<feature type="helix" evidence="6">
    <location>
        <begin position="194"/>
        <end position="210"/>
    </location>
</feature>
<feature type="helix" evidence="6">
    <location>
        <begin position="213"/>
        <end position="217"/>
    </location>
</feature>
<feature type="helix" evidence="6">
    <location>
        <begin position="219"/>
        <end position="233"/>
    </location>
</feature>
<feature type="helix" evidence="6">
    <location>
        <begin position="240"/>
        <end position="243"/>
    </location>
</feature>
<feature type="helix" evidence="6">
    <location>
        <begin position="248"/>
        <end position="254"/>
    </location>
</feature>
<feature type="strand" evidence="7">
    <location>
        <begin position="270"/>
        <end position="272"/>
    </location>
</feature>
<feature type="helix" evidence="6">
    <location>
        <begin position="275"/>
        <end position="286"/>
    </location>
</feature>
<feature type="helix" evidence="6">
    <location>
        <begin position="290"/>
        <end position="296"/>
    </location>
</feature>
<feature type="helix" evidence="6">
    <location>
        <begin position="300"/>
        <end position="312"/>
    </location>
</feature>
<feature type="turn" evidence="6">
    <location>
        <begin position="313"/>
        <end position="315"/>
    </location>
</feature>
<feature type="helix" evidence="6">
    <location>
        <begin position="317"/>
        <end position="327"/>
    </location>
</feature>
<feature type="helix" evidence="6">
    <location>
        <begin position="344"/>
        <end position="352"/>
    </location>
</feature>
<feature type="turn" evidence="6">
    <location>
        <begin position="353"/>
        <end position="355"/>
    </location>
</feature>
<feature type="helix" evidence="6">
    <location>
        <begin position="357"/>
        <end position="369"/>
    </location>
</feature>
<feature type="helix" evidence="6">
    <location>
        <begin position="372"/>
        <end position="381"/>
    </location>
</feature>
<feature type="turn" evidence="6">
    <location>
        <begin position="382"/>
        <end position="385"/>
    </location>
</feature>
<feature type="helix" evidence="6">
    <location>
        <begin position="387"/>
        <end position="391"/>
    </location>
</feature>
<feature type="helix" evidence="6">
    <location>
        <begin position="396"/>
        <end position="405"/>
    </location>
</feature>
<feature type="helix" evidence="6">
    <location>
        <begin position="410"/>
        <end position="420"/>
    </location>
</feature>
<feature type="helix" evidence="6">
    <location>
        <begin position="421"/>
        <end position="423"/>
    </location>
</feature>
<feature type="helix" evidence="6">
    <location>
        <begin position="424"/>
        <end position="429"/>
    </location>
</feature>
<feature type="helix" evidence="6">
    <location>
        <begin position="433"/>
        <end position="446"/>
    </location>
</feature>
<feature type="helix" evidence="6">
    <location>
        <begin position="450"/>
        <end position="461"/>
    </location>
</feature>
<feature type="helix" evidence="6">
    <location>
        <begin position="466"/>
        <end position="470"/>
    </location>
</feature>
<feature type="helix" evidence="6">
    <location>
        <begin position="471"/>
        <end position="476"/>
    </location>
</feature>
<feature type="helix" evidence="6">
    <location>
        <begin position="478"/>
        <end position="483"/>
    </location>
</feature>
<feature type="turn" evidence="6">
    <location>
        <begin position="487"/>
        <end position="489"/>
    </location>
</feature>
<feature type="helix" evidence="6">
    <location>
        <begin position="500"/>
        <end position="509"/>
    </location>
</feature>
<feature type="helix" evidence="6">
    <location>
        <begin position="514"/>
        <end position="516"/>
    </location>
</feature>
<feature type="helix" evidence="6">
    <location>
        <begin position="518"/>
        <end position="526"/>
    </location>
</feature>
<feature type="helix" evidence="6">
    <location>
        <begin position="529"/>
        <end position="536"/>
    </location>
</feature>
<feature type="helix" evidence="6">
    <location>
        <begin position="541"/>
        <end position="550"/>
    </location>
</feature>
<feature type="strand" evidence="6">
    <location>
        <begin position="551"/>
        <end position="553"/>
    </location>
</feature>
<feature type="helix" evidence="6">
    <location>
        <begin position="555"/>
        <end position="563"/>
    </location>
</feature>
<feature type="turn" evidence="6">
    <location>
        <begin position="564"/>
        <end position="567"/>
    </location>
</feature>
<feature type="helix" evidence="6">
    <location>
        <begin position="569"/>
        <end position="574"/>
    </location>
</feature>
<feature type="helix" evidence="6">
    <location>
        <begin position="576"/>
        <end position="587"/>
    </location>
</feature>
<feature type="helix" evidence="6">
    <location>
        <begin position="591"/>
        <end position="603"/>
    </location>
</feature>
<feature type="helix" evidence="6">
    <location>
        <begin position="605"/>
        <end position="610"/>
    </location>
</feature>
<feature type="strand" evidence="6">
    <location>
        <begin position="611"/>
        <end position="613"/>
    </location>
</feature>
<feature type="helix" evidence="6">
    <location>
        <begin position="614"/>
        <end position="620"/>
    </location>
</feature>
<feature type="helix" evidence="6">
    <location>
        <begin position="623"/>
        <end position="628"/>
    </location>
</feature>
<feature type="helix" evidence="6">
    <location>
        <begin position="630"/>
        <end position="638"/>
    </location>
</feature>
<sequence length="753" mass="84828">MVSVGSKSLPSRRHRTIEEDSLMGERGKSSNNHSERNKGMRRKDHKGNRGFDVDSSKKNQSGGAPNVKPASKKHSEFEHQNQFVRKEIDPETSKYFSEIANLFDSNEVELEERSVICGNALEETRGREYEIATDYIISHVLQTLLEGCELDQLCSFIRNSASVFPAIAMDRSGSHVAESALKSLATHLENPDAYSVIEEALHSICKVIVDNPLDMMCNCYGSHVLRRLLCLCKGVSLDSPELYGAKSSKALAKRLNLKMSQLDDNNLEIPHQGFPGMLTYLLSGLLSCSREDMKYLQVDQYSSLVLQTALRLMLKQDEQLLEIIPLILRCNSTNKKVEGFHIETNVAKEILESMKDNSFSHLVEVILEVAPESLYNEMFNKVFKNSLFELSVDRCANFVIQALISHARDQEQMGIMWEELAPRFKDLLEQGKSGVVASLIAVSQRLQSHENKCCEALVGAVCSTNESRISILPRLLFLDYYFGCRDKSTWEWAPGAKMHVMGCLILQGIFKFSSDHIQPYITSLTSMKAEYITETAKDSSGARVIEAFLASDAATKQKRRLIIKLRGHFGELSLHTSGSFTVEKCFDACNLTLREAIASELLDVKVDLSKTKQGPYLLRKLDIDGYASRPDQWKSRQEAKQSTYNEFCSAFGSNKSNFPKNTFVSDASEDAAQEIEVKNTRKEIDHHPTSGFKRHREKHAKDKDEPFAGEKRSKQKKNKTSEATDKPKLAGSKRPFLSGEMTGKNRHSNKMRI</sequence>
<reference key="1">
    <citation type="journal article" date="2000" name="Nature">
        <title>Sequence and analysis of chromosome 1 of the plant Arabidopsis thaliana.</title>
        <authorList>
            <person name="Theologis A."/>
            <person name="Ecker J.R."/>
            <person name="Palm C.J."/>
            <person name="Federspiel N.A."/>
            <person name="Kaul S."/>
            <person name="White O."/>
            <person name="Alonso J."/>
            <person name="Altafi H."/>
            <person name="Araujo R."/>
            <person name="Bowman C.L."/>
            <person name="Brooks S.Y."/>
            <person name="Buehler E."/>
            <person name="Chan A."/>
            <person name="Chao Q."/>
            <person name="Chen H."/>
            <person name="Cheuk R.F."/>
            <person name="Chin C.W."/>
            <person name="Chung M.K."/>
            <person name="Conn L."/>
            <person name="Conway A.B."/>
            <person name="Conway A.R."/>
            <person name="Creasy T.H."/>
            <person name="Dewar K."/>
            <person name="Dunn P."/>
            <person name="Etgu P."/>
            <person name="Feldblyum T.V."/>
            <person name="Feng J.-D."/>
            <person name="Fong B."/>
            <person name="Fujii C.Y."/>
            <person name="Gill J.E."/>
            <person name="Goldsmith A.D."/>
            <person name="Haas B."/>
            <person name="Hansen N.F."/>
            <person name="Hughes B."/>
            <person name="Huizar L."/>
            <person name="Hunter J.L."/>
            <person name="Jenkins J."/>
            <person name="Johnson-Hopson C."/>
            <person name="Khan S."/>
            <person name="Khaykin E."/>
            <person name="Kim C.J."/>
            <person name="Koo H.L."/>
            <person name="Kremenetskaia I."/>
            <person name="Kurtz D.B."/>
            <person name="Kwan A."/>
            <person name="Lam B."/>
            <person name="Langin-Hooper S."/>
            <person name="Lee A."/>
            <person name="Lee J.M."/>
            <person name="Lenz C.A."/>
            <person name="Li J.H."/>
            <person name="Li Y.-P."/>
            <person name="Lin X."/>
            <person name="Liu S.X."/>
            <person name="Liu Z.A."/>
            <person name="Luros J.S."/>
            <person name="Maiti R."/>
            <person name="Marziali A."/>
            <person name="Militscher J."/>
            <person name="Miranda M."/>
            <person name="Nguyen M."/>
            <person name="Nierman W.C."/>
            <person name="Osborne B.I."/>
            <person name="Pai G."/>
            <person name="Peterson J."/>
            <person name="Pham P.K."/>
            <person name="Rizzo M."/>
            <person name="Rooney T."/>
            <person name="Rowley D."/>
            <person name="Sakano H."/>
            <person name="Salzberg S.L."/>
            <person name="Schwartz J.R."/>
            <person name="Shinn P."/>
            <person name="Southwick A.M."/>
            <person name="Sun H."/>
            <person name="Tallon L.J."/>
            <person name="Tambunga G."/>
            <person name="Toriumi M.J."/>
            <person name="Town C.D."/>
            <person name="Utterback T."/>
            <person name="Van Aken S."/>
            <person name="Vaysberg M."/>
            <person name="Vysotskaia V.S."/>
            <person name="Walker M."/>
            <person name="Wu D."/>
            <person name="Yu G."/>
            <person name="Fraser C.M."/>
            <person name="Venter J.C."/>
            <person name="Davis R.W."/>
        </authorList>
    </citation>
    <scope>NUCLEOTIDE SEQUENCE [LARGE SCALE GENOMIC DNA]</scope>
    <source>
        <strain>cv. Columbia</strain>
    </source>
</reference>
<reference key="2">
    <citation type="journal article" date="2017" name="Plant J.">
        <title>Araport11: a complete reannotation of the Arabidopsis thaliana reference genome.</title>
        <authorList>
            <person name="Cheng C.Y."/>
            <person name="Krishnakumar V."/>
            <person name="Chan A.P."/>
            <person name="Thibaud-Nissen F."/>
            <person name="Schobel S."/>
            <person name="Town C.D."/>
        </authorList>
    </citation>
    <scope>GENOME REANNOTATION</scope>
    <source>
        <strain>cv. Columbia</strain>
    </source>
</reference>
<reference key="3">
    <citation type="journal article" date="2003" name="Science">
        <title>Empirical analysis of transcriptional activity in the Arabidopsis genome.</title>
        <authorList>
            <person name="Yamada K."/>
            <person name="Lim J."/>
            <person name="Dale J.M."/>
            <person name="Chen H."/>
            <person name="Shinn P."/>
            <person name="Palm C.J."/>
            <person name="Southwick A.M."/>
            <person name="Wu H.C."/>
            <person name="Kim C.J."/>
            <person name="Nguyen M."/>
            <person name="Pham P.K."/>
            <person name="Cheuk R.F."/>
            <person name="Karlin-Newmann G."/>
            <person name="Liu S.X."/>
            <person name="Lam B."/>
            <person name="Sakano H."/>
            <person name="Wu T."/>
            <person name="Yu G."/>
            <person name="Miranda M."/>
            <person name="Quach H.L."/>
            <person name="Tripp M."/>
            <person name="Chang C.H."/>
            <person name="Lee J.M."/>
            <person name="Toriumi M.J."/>
            <person name="Chan M.M."/>
            <person name="Tang C.C."/>
            <person name="Onodera C.S."/>
            <person name="Deng J.M."/>
            <person name="Akiyama K."/>
            <person name="Ansari Y."/>
            <person name="Arakawa T."/>
            <person name="Banh J."/>
            <person name="Banno F."/>
            <person name="Bowser L."/>
            <person name="Brooks S.Y."/>
            <person name="Carninci P."/>
            <person name="Chao Q."/>
            <person name="Choy N."/>
            <person name="Enju A."/>
            <person name="Goldsmith A.D."/>
            <person name="Gurjal M."/>
            <person name="Hansen N.F."/>
            <person name="Hayashizaki Y."/>
            <person name="Johnson-Hopson C."/>
            <person name="Hsuan V.W."/>
            <person name="Iida K."/>
            <person name="Karnes M."/>
            <person name="Khan S."/>
            <person name="Koesema E."/>
            <person name="Ishida J."/>
            <person name="Jiang P.X."/>
            <person name="Jones T."/>
            <person name="Kawai J."/>
            <person name="Kamiya A."/>
            <person name="Meyers C."/>
            <person name="Nakajima M."/>
            <person name="Narusaka M."/>
            <person name="Seki M."/>
            <person name="Sakurai T."/>
            <person name="Satou M."/>
            <person name="Tamse R."/>
            <person name="Vaysberg M."/>
            <person name="Wallender E.K."/>
            <person name="Wong C."/>
            <person name="Yamamura Y."/>
            <person name="Yuan S."/>
            <person name="Shinozaki K."/>
            <person name="Davis R.W."/>
            <person name="Theologis A."/>
            <person name="Ecker J.R."/>
        </authorList>
    </citation>
    <scope>NUCLEOTIDE SEQUENCE [LARGE SCALE MRNA] (ISOFORM 1)</scope>
    <source>
        <strain>cv. Columbia</strain>
    </source>
</reference>
<reference key="4">
    <citation type="journal article" date="2004" name="Genome Res.">
        <title>Whole genome sequence comparisons and 'full-length' cDNA sequences: a combined approach to evaluate and improve Arabidopsis genome annotation.</title>
        <authorList>
            <person name="Castelli V."/>
            <person name="Aury J.-M."/>
            <person name="Jaillon O."/>
            <person name="Wincker P."/>
            <person name="Clepet C."/>
            <person name="Menard M."/>
            <person name="Cruaud C."/>
            <person name="Quetier F."/>
            <person name="Scarpelli C."/>
            <person name="Schaechter V."/>
            <person name="Temple G."/>
            <person name="Caboche M."/>
            <person name="Weissenbach J."/>
            <person name="Salanoubat M."/>
        </authorList>
    </citation>
    <scope>NUCLEOTIDE SEQUENCE [LARGE SCALE MRNA] (ISOFORM 2)</scope>
    <source>
        <strain>cv. Columbia</strain>
    </source>
</reference>
<reference key="5">
    <citation type="journal article" date="2009" name="FEBS J.">
        <title>Molecular characterization of Arabidopsis thaliana PUF proteins -- binding specificity and target candidates.</title>
        <authorList>
            <person name="Francischini C.W."/>
            <person name="Quaggio R.B."/>
        </authorList>
    </citation>
    <scope>GENE FAMILY</scope>
</reference>
<reference key="6">
    <citation type="journal article" date="2010" name="BMC Plant Biol.">
        <title>The Puf family of RNA-binding proteins in plants: phylogeny, structural modeling, activity and subcellular localization.</title>
        <authorList>
            <person name="Tam P.P."/>
            <person name="Barrette-Ng I.H."/>
            <person name="Simon D.M."/>
            <person name="Tam M.W."/>
            <person name="Ang A.L."/>
            <person name="Muench D.G."/>
        </authorList>
    </citation>
    <scope>GENE FAMILY</scope>
    <scope>SUBCELLULAR LOCATION</scope>
</reference>
<evidence type="ECO:0000250" key="1"/>
<evidence type="ECO:0000256" key="2">
    <source>
        <dbReference type="SAM" id="MobiDB-lite"/>
    </source>
</evidence>
<evidence type="ECO:0000269" key="3">
    <source>
    </source>
</evidence>
<evidence type="ECO:0000303" key="4">
    <source>
    </source>
</evidence>
<evidence type="ECO:0000305" key="5"/>
<evidence type="ECO:0007829" key="6">
    <source>
        <dbReference type="PDB" id="5WZJ"/>
    </source>
</evidence>
<evidence type="ECO:0007829" key="7">
    <source>
        <dbReference type="PDB" id="5WZK"/>
    </source>
</evidence>
<proteinExistence type="evidence at protein level"/>
<protein>
    <recommendedName>
        <fullName>Pumilio homolog 23</fullName>
        <shortName>APUM-23</shortName>
        <shortName>AtPUM23</shortName>
    </recommendedName>
</protein>
<organism>
    <name type="scientific">Arabidopsis thaliana</name>
    <name type="common">Mouse-ear cress</name>
    <dbReference type="NCBI Taxonomy" id="3702"/>
    <lineage>
        <taxon>Eukaryota</taxon>
        <taxon>Viridiplantae</taxon>
        <taxon>Streptophyta</taxon>
        <taxon>Embryophyta</taxon>
        <taxon>Tracheophyta</taxon>
        <taxon>Spermatophyta</taxon>
        <taxon>Magnoliopsida</taxon>
        <taxon>eudicotyledons</taxon>
        <taxon>Gunneridae</taxon>
        <taxon>Pentapetalae</taxon>
        <taxon>rosids</taxon>
        <taxon>malvids</taxon>
        <taxon>Brassicales</taxon>
        <taxon>Brassicaceae</taxon>
        <taxon>Camelineae</taxon>
        <taxon>Arabidopsis</taxon>
    </lineage>
</organism>
<comment type="function">
    <text evidence="1">Sequence-specific RNA-binding protein that regulates translation and mRNA stability by binding the 3'-UTR of target mRNAs.</text>
</comment>
<comment type="subcellular location">
    <subcellularLocation>
        <location evidence="3">Nucleus</location>
        <location evidence="3">Nucleolus</location>
    </subcellularLocation>
</comment>
<comment type="alternative products">
    <event type="alternative splicing"/>
    <isoform>
        <id>Q9C552-1</id>
        <name>1</name>
        <sequence type="displayed"/>
    </isoform>
    <isoform>
        <id>Q9C552-2</id>
        <name>2</name>
        <sequence type="described" ref="VSP_040181"/>
    </isoform>
</comment>
<comment type="domain">
    <text evidence="1">The pumilio repeats mediate the association with RNA by packing together to form a right-handed superhelix that approximates a half donut. The number as well as the specific sequence of the repeats determine the specificity for target mRNAs (By similarity).</text>
</comment>
<comment type="miscellaneous">
    <molecule>Isoform 2</molecule>
    <text evidence="5">May be due to a competing acceptor splice site.</text>
</comment>
<comment type="sequence caution" evidence="5">
    <conflict type="miscellaneous discrepancy">
        <sequence resource="EMBL" id="BX815356"/>
    </conflict>
    <text>Sequencing errors.</text>
</comment>
<keyword id="KW-0002">3D-structure</keyword>
<keyword id="KW-0025">Alternative splicing</keyword>
<keyword id="KW-0539">Nucleus</keyword>
<keyword id="KW-1185">Reference proteome</keyword>
<keyword id="KW-0677">Repeat</keyword>
<keyword id="KW-0694">RNA-binding</keyword>
<keyword id="KW-0810">Translation regulation</keyword>
<accession>Q9C552</accession>
<accession>Q3E7J5</accession>
<accession>Q3ECD8</accession>
<name>PUM23_ARATH</name>